<keyword id="KW-0472">Membrane</keyword>
<keyword id="KW-0496">Mitochondrion</keyword>
<keyword id="KW-0999">Mitochondrion inner membrane</keyword>
<keyword id="KW-1185">Reference proteome</keyword>
<keyword id="KW-1278">Translocase</keyword>
<keyword id="KW-0812">Transmembrane</keyword>
<keyword id="KW-1133">Transmembrane helix</keyword>
<proteinExistence type="inferred from homology"/>
<feature type="chain" id="PRO_0000183767" description="Cytochrome c oxidase subunit 3">
    <location>
        <begin position="1"/>
        <end position="262"/>
    </location>
</feature>
<feature type="transmembrane region" description="Helical" evidence="2">
    <location>
        <begin position="39"/>
        <end position="59"/>
    </location>
</feature>
<feature type="transmembrane region" description="Helical" evidence="2">
    <location>
        <begin position="83"/>
        <end position="103"/>
    </location>
</feature>
<feature type="transmembrane region" description="Helical" evidence="2">
    <location>
        <begin position="120"/>
        <end position="140"/>
    </location>
</feature>
<feature type="transmembrane region" description="Helical" evidence="2">
    <location>
        <begin position="163"/>
        <end position="183"/>
    </location>
</feature>
<feature type="transmembrane region" description="Helical" evidence="2">
    <location>
        <begin position="198"/>
        <end position="218"/>
    </location>
</feature>
<feature type="transmembrane region" description="Helical" evidence="2">
    <location>
        <begin position="240"/>
        <end position="260"/>
    </location>
</feature>
<feature type="sequence variant" description="In strain: Zimbabwe 53." evidence="3">
    <original>L</original>
    <variation>M</variation>
    <location>
        <position position="170"/>
    </location>
</feature>
<comment type="function">
    <text evidence="1">Component of the cytochrome c oxidase, the last enzyme in the mitochondrial electron transport chain which drives oxidative phosphorylation. The respiratory chain contains 3 multisubunit complexes succinate dehydrogenase (complex II, CII), ubiquinol-cytochrome c oxidoreductase (cytochrome b-c1 complex, complex III, CIII) and cytochrome c oxidase (complex IV, CIV), that cooperate to transfer electrons derived from NADH and succinate to molecular oxygen, creating an electrochemical gradient over the inner membrane that drives transmembrane transport and the ATP synthase. Cytochrome c oxidase is the component of the respiratory chain that catalyzes the reduction of oxygen to water. Electrons originating from reduced cytochrome c in the intermembrane space (IMS) are transferred via the dinuclear copper A center (CU(A)) of subunit 2 and heme A of subunit 1 to the active site in subunit 1, a binuclear center (BNC) formed by heme A3 and copper B (CU(B)). The BNC reduces molecular oxygen to 2 water molecules using 4 electrons from cytochrome c in the IMS and 4 protons from the mitochondrial matrix.</text>
</comment>
<comment type="catalytic activity">
    <reaction evidence="1">
        <text>4 Fe(II)-[cytochrome c] + O2 + 8 H(+)(in) = 4 Fe(III)-[cytochrome c] + 2 H2O + 4 H(+)(out)</text>
        <dbReference type="Rhea" id="RHEA:11436"/>
        <dbReference type="Rhea" id="RHEA-COMP:10350"/>
        <dbReference type="Rhea" id="RHEA-COMP:14399"/>
        <dbReference type="ChEBI" id="CHEBI:15377"/>
        <dbReference type="ChEBI" id="CHEBI:15378"/>
        <dbReference type="ChEBI" id="CHEBI:15379"/>
        <dbReference type="ChEBI" id="CHEBI:29033"/>
        <dbReference type="ChEBI" id="CHEBI:29034"/>
        <dbReference type="EC" id="7.1.1.9"/>
    </reaction>
    <physiologicalReaction direction="left-to-right" evidence="1">
        <dbReference type="Rhea" id="RHEA:11437"/>
    </physiologicalReaction>
</comment>
<comment type="subunit">
    <text evidence="1">Component of the cytochrome c oxidase (complex IV, CIV), a multisubunit enzyme composed of a catalytic core of 3 subunits and several supernumerary subunits. The complex exists as a monomer or a dimer and forms supercomplexes (SCs) in the inner mitochondrial membrane with ubiquinol-cytochrome c oxidoreductase (cytochrome b-c1 complex, complex III, CIII).</text>
</comment>
<comment type="subcellular location">
    <subcellularLocation>
        <location evidence="1">Mitochondrion inner membrane</location>
        <topology evidence="1">Multi-pass membrane protein</topology>
    </subcellularLocation>
</comment>
<comment type="similarity">
    <text evidence="4">Belongs to the cytochrome c oxidase subunit 3 family.</text>
</comment>
<gene>
    <name type="primary">mt:CoIII</name>
    <name type="synonym">CoIII</name>
</gene>
<dbReference type="EC" id="7.1.1.9"/>
<dbReference type="EMBL" id="AF200828">
    <property type="protein sequence ID" value="AAF77231.1"/>
    <property type="molecule type" value="Genomic_DNA"/>
</dbReference>
<dbReference type="EMBL" id="AF200829">
    <property type="protein sequence ID" value="AAF77243.1"/>
    <property type="molecule type" value="Genomic_DNA"/>
</dbReference>
<dbReference type="EMBL" id="AJ400907">
    <property type="protein sequence ID" value="CAB91056.1"/>
    <property type="molecule type" value="Genomic_DNA"/>
</dbReference>
<dbReference type="EMBL" id="EU493887">
    <property type="protein sequence ID" value="ACA62455.1"/>
    <property type="molecule type" value="Genomic_DNA"/>
</dbReference>
<dbReference type="EMBL" id="KJ947872">
    <property type="protein sequence ID" value="AIC64009.1"/>
    <property type="molecule type" value="Genomic_DNA"/>
</dbReference>
<dbReference type="EMBL" id="U37541">
    <property type="protein sequence ID" value="AAC47816.1"/>
    <property type="molecule type" value="Genomic_DNA"/>
</dbReference>
<dbReference type="EMBL" id="J01404">
    <property type="protein sequence ID" value="AAB59243.1"/>
    <property type="molecule type" value="Genomic_DNA"/>
</dbReference>
<dbReference type="EMBL" id="M37275">
    <property type="protein sequence ID" value="AAA69708.1"/>
    <property type="molecule type" value="Genomic_DNA"/>
</dbReference>
<dbReference type="PIR" id="A00485">
    <property type="entry name" value="OTFF3"/>
</dbReference>
<dbReference type="RefSeq" id="YP_009047271.1">
    <property type="nucleotide sequence ID" value="NC_024511.2"/>
</dbReference>
<dbReference type="SMR" id="P00417"/>
<dbReference type="ComplexPortal" id="CPX-8620">
    <property type="entry name" value="Mitochondrial respiratory chain complex IV"/>
</dbReference>
<dbReference type="ComplexPortal" id="CPX-8621">
    <property type="entry name" value="Mitochondrial respiratory chain complex IV, testis-specific variant"/>
</dbReference>
<dbReference type="FunCoup" id="P00417">
    <property type="interactions" value="233"/>
</dbReference>
<dbReference type="STRING" id="7227.FBpp0100180"/>
<dbReference type="GlyGen" id="P00417">
    <property type="glycosylation" value="1 site"/>
</dbReference>
<dbReference type="PaxDb" id="7227-FBpp0100180"/>
<dbReference type="EnsemblMetazoa" id="FBtr0100868">
    <property type="protein sequence ID" value="FBpp0100180"/>
    <property type="gene ID" value="FBgn0013676"/>
</dbReference>
<dbReference type="GeneID" id="19893540"/>
<dbReference type="KEGG" id="dme:Dmel_CG34074"/>
<dbReference type="AGR" id="FB:FBgn0013676"/>
<dbReference type="CTD" id="4514"/>
<dbReference type="FlyBase" id="FBgn0013676">
    <property type="gene designation" value="mt:CoIII"/>
</dbReference>
<dbReference type="VEuPathDB" id="VectorBase:FBgn0013676"/>
<dbReference type="eggNOG" id="KOG4664">
    <property type="taxonomic scope" value="Eukaryota"/>
</dbReference>
<dbReference type="GeneTree" id="ENSGT00390000013064"/>
<dbReference type="HOGENOM" id="CLU_044071_0_0_1"/>
<dbReference type="InParanoid" id="P00417"/>
<dbReference type="OMA" id="SIYWWGS"/>
<dbReference type="OrthoDB" id="10050457at2759"/>
<dbReference type="PhylomeDB" id="P00417"/>
<dbReference type="Reactome" id="R-DME-5628897">
    <property type="pathway name" value="TP53 Regulates Metabolic Genes"/>
</dbReference>
<dbReference type="Reactome" id="R-DME-611105">
    <property type="pathway name" value="Respiratory electron transport"/>
</dbReference>
<dbReference type="Reactome" id="R-DME-9707564">
    <property type="pathway name" value="Cytoprotection by HMOX1"/>
</dbReference>
<dbReference type="Reactome" id="R-DME-9864848">
    <property type="pathway name" value="Complex IV assembly"/>
</dbReference>
<dbReference type="BioGRID-ORCS" id="19893540">
    <property type="hits" value="0 hits in 1 CRISPR screen"/>
</dbReference>
<dbReference type="GenomeRNAi" id="19893540"/>
<dbReference type="PRO" id="PR:P00417"/>
<dbReference type="Proteomes" id="UP000000803">
    <property type="component" value="Mitochondrion"/>
</dbReference>
<dbReference type="Bgee" id="FBgn0013676">
    <property type="expression patterns" value="Expressed in adult anterior midgut class I enteroendocrine cell in adult midgut (Drosophila) and 274 other cell types or tissues"/>
</dbReference>
<dbReference type="ExpressionAtlas" id="P00417">
    <property type="expression patterns" value="baseline and differential"/>
</dbReference>
<dbReference type="GO" id="GO:0005743">
    <property type="term" value="C:mitochondrial inner membrane"/>
    <property type="evidence" value="ECO:0000314"/>
    <property type="project" value="FlyBase"/>
</dbReference>
<dbReference type="GO" id="GO:0005739">
    <property type="term" value="C:mitochondrion"/>
    <property type="evidence" value="ECO:0000318"/>
    <property type="project" value="GO_Central"/>
</dbReference>
<dbReference type="GO" id="GO:0045277">
    <property type="term" value="C:respiratory chain complex IV"/>
    <property type="evidence" value="ECO:0000314"/>
    <property type="project" value="FlyBase"/>
</dbReference>
<dbReference type="GO" id="GO:0004129">
    <property type="term" value="F:cytochrome-c oxidase activity"/>
    <property type="evidence" value="ECO:0007669"/>
    <property type="project" value="UniProtKB-EC"/>
</dbReference>
<dbReference type="GO" id="GO:0006123">
    <property type="term" value="P:mitochondrial electron transport, cytochrome c to oxygen"/>
    <property type="evidence" value="ECO:0000318"/>
    <property type="project" value="GO_Central"/>
</dbReference>
<dbReference type="CDD" id="cd01665">
    <property type="entry name" value="Cyt_c_Oxidase_III"/>
    <property type="match status" value="1"/>
</dbReference>
<dbReference type="FunFam" id="1.10.287.70:FF:000048">
    <property type="entry name" value="Cytochrome c oxidase subunit 3"/>
    <property type="match status" value="1"/>
</dbReference>
<dbReference type="FunFam" id="1.20.120.80:FF:000002">
    <property type="entry name" value="Cytochrome c oxidase subunit 3"/>
    <property type="match status" value="1"/>
</dbReference>
<dbReference type="Gene3D" id="1.10.287.70">
    <property type="match status" value="1"/>
</dbReference>
<dbReference type="Gene3D" id="1.20.120.80">
    <property type="entry name" value="Cytochrome c oxidase, subunit III, four-helix bundle"/>
    <property type="match status" value="1"/>
</dbReference>
<dbReference type="InterPro" id="IPR024791">
    <property type="entry name" value="Cyt_c/ubiquinol_Oxase_su3"/>
</dbReference>
<dbReference type="InterPro" id="IPR033945">
    <property type="entry name" value="Cyt_c_oxase_su3_dom"/>
</dbReference>
<dbReference type="InterPro" id="IPR000298">
    <property type="entry name" value="Cyt_c_oxidase-like_su3"/>
</dbReference>
<dbReference type="InterPro" id="IPR035973">
    <property type="entry name" value="Cyt_c_oxidase_su3-like_sf"/>
</dbReference>
<dbReference type="InterPro" id="IPR013833">
    <property type="entry name" value="Cyt_c_oxidase_su3_a-hlx"/>
</dbReference>
<dbReference type="PANTHER" id="PTHR11403:SF7">
    <property type="entry name" value="CYTOCHROME C OXIDASE SUBUNIT 3"/>
    <property type="match status" value="1"/>
</dbReference>
<dbReference type="PANTHER" id="PTHR11403">
    <property type="entry name" value="CYTOCHROME C OXIDASE SUBUNIT III"/>
    <property type="match status" value="1"/>
</dbReference>
<dbReference type="Pfam" id="PF00510">
    <property type="entry name" value="COX3"/>
    <property type="match status" value="1"/>
</dbReference>
<dbReference type="SUPFAM" id="SSF81452">
    <property type="entry name" value="Cytochrome c oxidase subunit III-like"/>
    <property type="match status" value="1"/>
</dbReference>
<dbReference type="PROSITE" id="PS50253">
    <property type="entry name" value="COX3"/>
    <property type="match status" value="1"/>
</dbReference>
<reference key="1">
    <citation type="journal article" date="2000" name="J. Mol. Evol.">
        <title>Comparative genomics of mitochondrial DNA in members of the Drosophila melanogaster subgroup.</title>
        <authorList>
            <person name="Ballard J.W.O."/>
        </authorList>
    </citation>
    <scope>NUCLEOTIDE SEQUENCE [GENOMIC DNA]</scope>
    <scope>VARIANT MET-170</scope>
    <source>
        <strain>Oregon-R</strain>
        <strain>Zimbabwe 53</strain>
    </source>
</reference>
<reference key="2">
    <citation type="journal article" date="2001" name="Heredity">
        <title>I-R system of hybrid dysgenesis in Drosophila melanogaster: analysis of the mitochondrial DNA in reactive strains exhibiting different potentials for I factor transposition.</title>
        <authorList>
            <person name="Azou Y."/>
            <person name="Bregliano J.C."/>
        </authorList>
    </citation>
    <scope>NUCLEOTIDE SEQUENCE [GENOMIC DNA]</scope>
    <source>
        <strain>Paris</strain>
    </source>
</reference>
<reference key="3">
    <citation type="journal article" date="2008" name="Biol. Lett.">
        <title>Out of Hawaii: the origin and biogeography of the genus Scaptomyza (Diptera: Drosophilidae).</title>
        <authorList>
            <person name="O'Grady P.M."/>
            <person name="DeSalle R."/>
        </authorList>
    </citation>
    <scope>NUCLEOTIDE SEQUENCE [GENOMIC DNA]</scope>
</reference>
<reference key="4">
    <citation type="journal article" date="1995" name="Insect Mol. Biol.">
        <title>Drosophila melanogaster mitochondrial DNA: completion of the nucleotide sequence and evolutionary comparisons.</title>
        <authorList>
            <person name="Lewis D.L."/>
            <person name="Farr C.L."/>
            <person name="Kaguni L.S."/>
        </authorList>
    </citation>
    <scope>NUCLEOTIDE SEQUENCE [LARGE SCALE GENOMIC DNA]</scope>
</reference>
<reference key="5">
    <citation type="submission" date="2014-08" db="EMBL/GenBank/DDBJ databases">
        <authorList>
            <person name="Wan K."/>
            <person name="Celniker S."/>
        </authorList>
    </citation>
    <scope>NUCLEOTIDE SEQUENCE [LARGE SCALE GENOMIC DNA]</scope>
    <source>
        <strain>Berkeley</strain>
    </source>
</reference>
<reference key="6">
    <citation type="journal article" date="1983" name="Nature">
        <title>Drosophila melanogaster mitochondrial DNA, a novel organization and genetic code.</title>
        <authorList>
            <person name="de Bruijn M.H.L."/>
        </authorList>
    </citation>
    <scope>NUCLEOTIDE SEQUENCE [GENOMIC DNA] OF 1-179</scope>
    <source>
        <strain>Oregon-R</strain>
    </source>
</reference>
<reference key="7">
    <citation type="journal article" date="1983" name="Nucleic Acids Res.">
        <title>Transfer RNA genes in Drosophila mitochondrial DNA: related 5' flanking sequences and comparisons to mammalian mitochondrial tRNA genes.</title>
        <authorList>
            <person name="Clary D.O."/>
            <person name="Wahleithner J.A."/>
            <person name="Wolstenholme D.R."/>
        </authorList>
    </citation>
    <scope>NUCLEOTIDE SEQUENCE [GENOMIC DNA] OF 179-262</scope>
</reference>
<reference key="8">
    <citation type="journal article" date="1988" name="Genetics">
        <title>Drosophila melanogaster mitochondrial DNA: gene organization and evolutionary considerations.</title>
        <authorList>
            <person name="Garesse R."/>
        </authorList>
    </citation>
    <scope>NUCLEOTIDE SEQUENCE [GENOMIC DNA] OF 179-262</scope>
    <source>
        <strain>Bretagne</strain>
    </source>
</reference>
<sequence>MSTHSNHPFHLVDYSPWPLTGAIGAMTTVSGMVKWFHQYDISLFVLGNIITILTVYQWWRDVSREGTYQGLHTYAVTIGLRWGMILFILSEVLFFVSFFWAFFHSSLSPAIELGASWPPMGIISFNPFQIPLLNTAILLASGVTVTWAHHSLMENNHSQTTQGLFFTVLLGIYFTILQAYEYIEAPFTIADSIYGSTFFMATGFHGIHVLIGTTFLLVCLLRHLNNHFSKNHHFGFEAAAWYWHFVDVVWLFLYITIYWWGG</sequence>
<name>COX3_DROME</name>
<organism>
    <name type="scientific">Drosophila melanogaster</name>
    <name type="common">Fruit fly</name>
    <dbReference type="NCBI Taxonomy" id="7227"/>
    <lineage>
        <taxon>Eukaryota</taxon>
        <taxon>Metazoa</taxon>
        <taxon>Ecdysozoa</taxon>
        <taxon>Arthropoda</taxon>
        <taxon>Hexapoda</taxon>
        <taxon>Insecta</taxon>
        <taxon>Pterygota</taxon>
        <taxon>Neoptera</taxon>
        <taxon>Endopterygota</taxon>
        <taxon>Diptera</taxon>
        <taxon>Brachycera</taxon>
        <taxon>Muscomorpha</taxon>
        <taxon>Ephydroidea</taxon>
        <taxon>Drosophilidae</taxon>
        <taxon>Drosophila</taxon>
        <taxon>Sophophora</taxon>
    </lineage>
</organism>
<protein>
    <recommendedName>
        <fullName>Cytochrome c oxidase subunit 3</fullName>
        <ecNumber>7.1.1.9</ecNumber>
    </recommendedName>
    <alternativeName>
        <fullName>Cytochrome c oxidase polypeptide III</fullName>
    </alternativeName>
</protein>
<evidence type="ECO:0000250" key="1">
    <source>
        <dbReference type="UniProtKB" id="P00420"/>
    </source>
</evidence>
<evidence type="ECO:0000255" key="2"/>
<evidence type="ECO:0000269" key="3">
    <source>
    </source>
</evidence>
<evidence type="ECO:0000305" key="4"/>
<geneLocation type="mitochondrion"/>
<accession>P00417</accession>
<accession>B1PTQ2</accession>
<accession>Q7HMA0</accession>
<accession>Q9MGN4</accession>